<reference key="1">
    <citation type="journal article" date="2004" name="Nat. Genet.">
        <title>Complete sequencing and characterization of 21,243 full-length human cDNAs.</title>
        <authorList>
            <person name="Ota T."/>
            <person name="Suzuki Y."/>
            <person name="Nishikawa T."/>
            <person name="Otsuki T."/>
            <person name="Sugiyama T."/>
            <person name="Irie R."/>
            <person name="Wakamatsu A."/>
            <person name="Hayashi K."/>
            <person name="Sato H."/>
            <person name="Nagai K."/>
            <person name="Kimura K."/>
            <person name="Makita H."/>
            <person name="Sekine M."/>
            <person name="Obayashi M."/>
            <person name="Nishi T."/>
            <person name="Shibahara T."/>
            <person name="Tanaka T."/>
            <person name="Ishii S."/>
            <person name="Yamamoto J."/>
            <person name="Saito K."/>
            <person name="Kawai Y."/>
            <person name="Isono Y."/>
            <person name="Nakamura Y."/>
            <person name="Nagahari K."/>
            <person name="Murakami K."/>
            <person name="Yasuda T."/>
            <person name="Iwayanagi T."/>
            <person name="Wagatsuma M."/>
            <person name="Shiratori A."/>
            <person name="Sudo H."/>
            <person name="Hosoiri T."/>
            <person name="Kaku Y."/>
            <person name="Kodaira H."/>
            <person name="Kondo H."/>
            <person name="Sugawara M."/>
            <person name="Takahashi M."/>
            <person name="Kanda K."/>
            <person name="Yokoi T."/>
            <person name="Furuya T."/>
            <person name="Kikkawa E."/>
            <person name="Omura Y."/>
            <person name="Abe K."/>
            <person name="Kamihara K."/>
            <person name="Katsuta N."/>
            <person name="Sato K."/>
            <person name="Tanikawa M."/>
            <person name="Yamazaki M."/>
            <person name="Ninomiya K."/>
            <person name="Ishibashi T."/>
            <person name="Yamashita H."/>
            <person name="Murakawa K."/>
            <person name="Fujimori K."/>
            <person name="Tanai H."/>
            <person name="Kimata M."/>
            <person name="Watanabe M."/>
            <person name="Hiraoka S."/>
            <person name="Chiba Y."/>
            <person name="Ishida S."/>
            <person name="Ono Y."/>
            <person name="Takiguchi S."/>
            <person name="Watanabe S."/>
            <person name="Yosida M."/>
            <person name="Hotuta T."/>
            <person name="Kusano J."/>
            <person name="Kanehori K."/>
            <person name="Takahashi-Fujii A."/>
            <person name="Hara H."/>
            <person name="Tanase T.-O."/>
            <person name="Nomura Y."/>
            <person name="Togiya S."/>
            <person name="Komai F."/>
            <person name="Hara R."/>
            <person name="Takeuchi K."/>
            <person name="Arita M."/>
            <person name="Imose N."/>
            <person name="Musashino K."/>
            <person name="Yuuki H."/>
            <person name="Oshima A."/>
            <person name="Sasaki N."/>
            <person name="Aotsuka S."/>
            <person name="Yoshikawa Y."/>
            <person name="Matsunawa H."/>
            <person name="Ichihara T."/>
            <person name="Shiohata N."/>
            <person name="Sano S."/>
            <person name="Moriya S."/>
            <person name="Momiyama H."/>
            <person name="Satoh N."/>
            <person name="Takami S."/>
            <person name="Terashima Y."/>
            <person name="Suzuki O."/>
            <person name="Nakagawa S."/>
            <person name="Senoh A."/>
            <person name="Mizoguchi H."/>
            <person name="Goto Y."/>
            <person name="Shimizu F."/>
            <person name="Wakebe H."/>
            <person name="Hishigaki H."/>
            <person name="Watanabe T."/>
            <person name="Sugiyama A."/>
            <person name="Takemoto M."/>
            <person name="Kawakami B."/>
            <person name="Yamazaki M."/>
            <person name="Watanabe K."/>
            <person name="Kumagai A."/>
            <person name="Itakura S."/>
            <person name="Fukuzumi Y."/>
            <person name="Fujimori Y."/>
            <person name="Komiyama M."/>
            <person name="Tashiro H."/>
            <person name="Tanigami A."/>
            <person name="Fujiwara T."/>
            <person name="Ono T."/>
            <person name="Yamada K."/>
            <person name="Fujii Y."/>
            <person name="Ozaki K."/>
            <person name="Hirao M."/>
            <person name="Ohmori Y."/>
            <person name="Kawabata A."/>
            <person name="Hikiji T."/>
            <person name="Kobatake N."/>
            <person name="Inagaki H."/>
            <person name="Ikema Y."/>
            <person name="Okamoto S."/>
            <person name="Okitani R."/>
            <person name="Kawakami T."/>
            <person name="Noguchi S."/>
            <person name="Itoh T."/>
            <person name="Shigeta K."/>
            <person name="Senba T."/>
            <person name="Matsumura K."/>
            <person name="Nakajima Y."/>
            <person name="Mizuno T."/>
            <person name="Morinaga M."/>
            <person name="Sasaki M."/>
            <person name="Togashi T."/>
            <person name="Oyama M."/>
            <person name="Hata H."/>
            <person name="Watanabe M."/>
            <person name="Komatsu T."/>
            <person name="Mizushima-Sugano J."/>
            <person name="Satoh T."/>
            <person name="Shirai Y."/>
            <person name="Takahashi Y."/>
            <person name="Nakagawa K."/>
            <person name="Okumura K."/>
            <person name="Nagase T."/>
            <person name="Nomura N."/>
            <person name="Kikuchi H."/>
            <person name="Masuho Y."/>
            <person name="Yamashita R."/>
            <person name="Nakai K."/>
            <person name="Yada T."/>
            <person name="Nakamura Y."/>
            <person name="Ohara O."/>
            <person name="Isogai T."/>
            <person name="Sugano S."/>
        </authorList>
    </citation>
    <scope>NUCLEOTIDE SEQUENCE [LARGE SCALE MRNA]</scope>
    <scope>VARIANT SER-40</scope>
    <source>
        <tissue>Testis</tissue>
    </source>
</reference>
<reference key="2">
    <citation type="journal article" date="2005" name="Nature">
        <title>The DNA sequence of the human X chromosome.</title>
        <authorList>
            <person name="Ross M.T."/>
            <person name="Grafham D.V."/>
            <person name="Coffey A.J."/>
            <person name="Scherer S."/>
            <person name="McLay K."/>
            <person name="Muzny D."/>
            <person name="Platzer M."/>
            <person name="Howell G.R."/>
            <person name="Burrows C."/>
            <person name="Bird C.P."/>
            <person name="Frankish A."/>
            <person name="Lovell F.L."/>
            <person name="Howe K.L."/>
            <person name="Ashurst J.L."/>
            <person name="Fulton R.S."/>
            <person name="Sudbrak R."/>
            <person name="Wen G."/>
            <person name="Jones M.C."/>
            <person name="Hurles M.E."/>
            <person name="Andrews T.D."/>
            <person name="Scott C.E."/>
            <person name="Searle S."/>
            <person name="Ramser J."/>
            <person name="Whittaker A."/>
            <person name="Deadman R."/>
            <person name="Carter N.P."/>
            <person name="Hunt S.E."/>
            <person name="Chen R."/>
            <person name="Cree A."/>
            <person name="Gunaratne P."/>
            <person name="Havlak P."/>
            <person name="Hodgson A."/>
            <person name="Metzker M.L."/>
            <person name="Richards S."/>
            <person name="Scott G."/>
            <person name="Steffen D."/>
            <person name="Sodergren E."/>
            <person name="Wheeler D.A."/>
            <person name="Worley K.C."/>
            <person name="Ainscough R."/>
            <person name="Ambrose K.D."/>
            <person name="Ansari-Lari M.A."/>
            <person name="Aradhya S."/>
            <person name="Ashwell R.I."/>
            <person name="Babbage A.K."/>
            <person name="Bagguley C.L."/>
            <person name="Ballabio A."/>
            <person name="Banerjee R."/>
            <person name="Barker G.E."/>
            <person name="Barlow K.F."/>
            <person name="Barrett I.P."/>
            <person name="Bates K.N."/>
            <person name="Beare D.M."/>
            <person name="Beasley H."/>
            <person name="Beasley O."/>
            <person name="Beck A."/>
            <person name="Bethel G."/>
            <person name="Blechschmidt K."/>
            <person name="Brady N."/>
            <person name="Bray-Allen S."/>
            <person name="Bridgeman A.M."/>
            <person name="Brown A.J."/>
            <person name="Brown M.J."/>
            <person name="Bonnin D."/>
            <person name="Bruford E.A."/>
            <person name="Buhay C."/>
            <person name="Burch P."/>
            <person name="Burford D."/>
            <person name="Burgess J."/>
            <person name="Burrill W."/>
            <person name="Burton J."/>
            <person name="Bye J.M."/>
            <person name="Carder C."/>
            <person name="Carrel L."/>
            <person name="Chako J."/>
            <person name="Chapman J.C."/>
            <person name="Chavez D."/>
            <person name="Chen E."/>
            <person name="Chen G."/>
            <person name="Chen Y."/>
            <person name="Chen Z."/>
            <person name="Chinault C."/>
            <person name="Ciccodicola A."/>
            <person name="Clark S.Y."/>
            <person name="Clarke G."/>
            <person name="Clee C.M."/>
            <person name="Clegg S."/>
            <person name="Clerc-Blankenburg K."/>
            <person name="Clifford K."/>
            <person name="Cobley V."/>
            <person name="Cole C.G."/>
            <person name="Conquer J.S."/>
            <person name="Corby N."/>
            <person name="Connor R.E."/>
            <person name="David R."/>
            <person name="Davies J."/>
            <person name="Davis C."/>
            <person name="Davis J."/>
            <person name="Delgado O."/>
            <person name="Deshazo D."/>
            <person name="Dhami P."/>
            <person name="Ding Y."/>
            <person name="Dinh H."/>
            <person name="Dodsworth S."/>
            <person name="Draper H."/>
            <person name="Dugan-Rocha S."/>
            <person name="Dunham A."/>
            <person name="Dunn M."/>
            <person name="Durbin K.J."/>
            <person name="Dutta I."/>
            <person name="Eades T."/>
            <person name="Ellwood M."/>
            <person name="Emery-Cohen A."/>
            <person name="Errington H."/>
            <person name="Evans K.L."/>
            <person name="Faulkner L."/>
            <person name="Francis F."/>
            <person name="Frankland J."/>
            <person name="Fraser A.E."/>
            <person name="Galgoczy P."/>
            <person name="Gilbert J."/>
            <person name="Gill R."/>
            <person name="Gloeckner G."/>
            <person name="Gregory S.G."/>
            <person name="Gribble S."/>
            <person name="Griffiths C."/>
            <person name="Grocock R."/>
            <person name="Gu Y."/>
            <person name="Gwilliam R."/>
            <person name="Hamilton C."/>
            <person name="Hart E.A."/>
            <person name="Hawes A."/>
            <person name="Heath P.D."/>
            <person name="Heitmann K."/>
            <person name="Hennig S."/>
            <person name="Hernandez J."/>
            <person name="Hinzmann B."/>
            <person name="Ho S."/>
            <person name="Hoffs M."/>
            <person name="Howden P.J."/>
            <person name="Huckle E.J."/>
            <person name="Hume J."/>
            <person name="Hunt P.J."/>
            <person name="Hunt A.R."/>
            <person name="Isherwood J."/>
            <person name="Jacob L."/>
            <person name="Johnson D."/>
            <person name="Jones S."/>
            <person name="de Jong P.J."/>
            <person name="Joseph S.S."/>
            <person name="Keenan S."/>
            <person name="Kelly S."/>
            <person name="Kershaw J.K."/>
            <person name="Khan Z."/>
            <person name="Kioschis P."/>
            <person name="Klages S."/>
            <person name="Knights A.J."/>
            <person name="Kosiura A."/>
            <person name="Kovar-Smith C."/>
            <person name="Laird G.K."/>
            <person name="Langford C."/>
            <person name="Lawlor S."/>
            <person name="Leversha M."/>
            <person name="Lewis L."/>
            <person name="Liu W."/>
            <person name="Lloyd C."/>
            <person name="Lloyd D.M."/>
            <person name="Loulseged H."/>
            <person name="Loveland J.E."/>
            <person name="Lovell J.D."/>
            <person name="Lozado R."/>
            <person name="Lu J."/>
            <person name="Lyne R."/>
            <person name="Ma J."/>
            <person name="Maheshwari M."/>
            <person name="Matthews L.H."/>
            <person name="McDowall J."/>
            <person name="McLaren S."/>
            <person name="McMurray A."/>
            <person name="Meidl P."/>
            <person name="Meitinger T."/>
            <person name="Milne S."/>
            <person name="Miner G."/>
            <person name="Mistry S.L."/>
            <person name="Morgan M."/>
            <person name="Morris S."/>
            <person name="Mueller I."/>
            <person name="Mullikin J.C."/>
            <person name="Nguyen N."/>
            <person name="Nordsiek G."/>
            <person name="Nyakatura G."/>
            <person name="O'dell C.N."/>
            <person name="Okwuonu G."/>
            <person name="Palmer S."/>
            <person name="Pandian R."/>
            <person name="Parker D."/>
            <person name="Parrish J."/>
            <person name="Pasternak S."/>
            <person name="Patel D."/>
            <person name="Pearce A.V."/>
            <person name="Pearson D.M."/>
            <person name="Pelan S.E."/>
            <person name="Perez L."/>
            <person name="Porter K.M."/>
            <person name="Ramsey Y."/>
            <person name="Reichwald K."/>
            <person name="Rhodes S."/>
            <person name="Ridler K.A."/>
            <person name="Schlessinger D."/>
            <person name="Schueler M.G."/>
            <person name="Sehra H.K."/>
            <person name="Shaw-Smith C."/>
            <person name="Shen H."/>
            <person name="Sheridan E.M."/>
            <person name="Shownkeen R."/>
            <person name="Skuce C.D."/>
            <person name="Smith M.L."/>
            <person name="Sotheran E.C."/>
            <person name="Steingruber H.E."/>
            <person name="Steward C.A."/>
            <person name="Storey R."/>
            <person name="Swann R.M."/>
            <person name="Swarbreck D."/>
            <person name="Tabor P.E."/>
            <person name="Taudien S."/>
            <person name="Taylor T."/>
            <person name="Teague B."/>
            <person name="Thomas K."/>
            <person name="Thorpe A."/>
            <person name="Timms K."/>
            <person name="Tracey A."/>
            <person name="Trevanion S."/>
            <person name="Tromans A.C."/>
            <person name="d'Urso M."/>
            <person name="Verduzco D."/>
            <person name="Villasana D."/>
            <person name="Waldron L."/>
            <person name="Wall M."/>
            <person name="Wang Q."/>
            <person name="Warren J."/>
            <person name="Warry G.L."/>
            <person name="Wei X."/>
            <person name="West A."/>
            <person name="Whitehead S.L."/>
            <person name="Whiteley M.N."/>
            <person name="Wilkinson J.E."/>
            <person name="Willey D.L."/>
            <person name="Williams G."/>
            <person name="Williams L."/>
            <person name="Williamson A."/>
            <person name="Williamson H."/>
            <person name="Wilming L."/>
            <person name="Woodmansey R.L."/>
            <person name="Wray P.W."/>
            <person name="Yen J."/>
            <person name="Zhang J."/>
            <person name="Zhou J."/>
            <person name="Zoghbi H."/>
            <person name="Zorilla S."/>
            <person name="Buck D."/>
            <person name="Reinhardt R."/>
            <person name="Poustka A."/>
            <person name="Rosenthal A."/>
            <person name="Lehrach H."/>
            <person name="Meindl A."/>
            <person name="Minx P.J."/>
            <person name="Hillier L.W."/>
            <person name="Willard H.F."/>
            <person name="Wilson R.K."/>
            <person name="Waterston R.H."/>
            <person name="Rice C.M."/>
            <person name="Vaudin M."/>
            <person name="Coulson A."/>
            <person name="Nelson D.L."/>
            <person name="Weinstock G."/>
            <person name="Sulston J.E."/>
            <person name="Durbin R.M."/>
            <person name="Hubbard T."/>
            <person name="Gibbs R.A."/>
            <person name="Beck S."/>
            <person name="Rogers J."/>
            <person name="Bentley D.R."/>
        </authorList>
    </citation>
    <scope>NUCLEOTIDE SEQUENCE [LARGE SCALE GENOMIC DNA]</scope>
</reference>
<reference key="3">
    <citation type="journal article" date="2004" name="Genome Res.">
        <title>The status, quality, and expansion of the NIH full-length cDNA project: the Mammalian Gene Collection (MGC).</title>
        <authorList>
            <consortium name="The MGC Project Team"/>
        </authorList>
    </citation>
    <scope>NUCLEOTIDE SEQUENCE [LARGE SCALE MRNA]</scope>
    <scope>VARIANT SER-40</scope>
    <source>
        <tissue>Testis</tissue>
    </source>
</reference>
<reference key="4">
    <citation type="journal article" date="2010" name="Mol. Cell">
        <title>MAGE-RING protein complexes comprise a family of E3 ubiquitin ligases.</title>
        <authorList>
            <person name="Doyle J.M."/>
            <person name="Gao J."/>
            <person name="Wang J."/>
            <person name="Yang M."/>
            <person name="Potts P.R."/>
        </authorList>
    </citation>
    <scope>FUNCTION</scope>
    <scope>INTERACTION WITH LNX1</scope>
</reference>
<evidence type="ECO:0000250" key="1">
    <source>
        <dbReference type="UniProtKB" id="Q8BQR7"/>
    </source>
</evidence>
<evidence type="ECO:0000255" key="2">
    <source>
        <dbReference type="PROSITE-ProRule" id="PRU00127"/>
    </source>
</evidence>
<evidence type="ECO:0000256" key="3">
    <source>
        <dbReference type="SAM" id="MobiDB-lite"/>
    </source>
</evidence>
<evidence type="ECO:0000269" key="4">
    <source>
    </source>
</evidence>
<evidence type="ECO:0000269" key="5">
    <source>
    </source>
</evidence>
<evidence type="ECO:0000269" key="6">
    <source>
    </source>
</evidence>
<proteinExistence type="evidence at protein level"/>
<feature type="chain" id="PRO_0000156719" description="Melanoma-associated antigen B18">
    <location>
        <begin position="1"/>
        <end position="343"/>
    </location>
</feature>
<feature type="domain" description="MAGE" evidence="2">
    <location>
        <begin position="107"/>
        <end position="306"/>
    </location>
</feature>
<feature type="region of interest" description="Disordered" evidence="3">
    <location>
        <begin position="1"/>
        <end position="102"/>
    </location>
</feature>
<feature type="region of interest" description="Interaction with LNX1" evidence="6">
    <location>
        <begin position="100"/>
        <end position="343"/>
    </location>
</feature>
<feature type="region of interest" description="Disordered" evidence="3">
    <location>
        <begin position="313"/>
        <end position="343"/>
    </location>
</feature>
<feature type="compositionally biased region" description="Basic residues" evidence="3">
    <location>
        <begin position="1"/>
        <end position="17"/>
    </location>
</feature>
<feature type="compositionally biased region" description="Polar residues" evidence="3">
    <location>
        <begin position="67"/>
        <end position="87"/>
    </location>
</feature>
<feature type="compositionally biased region" description="Basic and acidic residues" evidence="3">
    <location>
        <begin position="88"/>
        <end position="102"/>
    </location>
</feature>
<feature type="compositionally biased region" description="Low complexity" evidence="3">
    <location>
        <begin position="316"/>
        <end position="333"/>
    </location>
</feature>
<feature type="compositionally biased region" description="Polar residues" evidence="3">
    <location>
        <begin position="334"/>
        <end position="343"/>
    </location>
</feature>
<feature type="sequence variant" id="VAR_053500" description="In dbSNP:rs5944317." evidence="4 5">
    <original>P</original>
    <variation>S</variation>
    <location>
        <position position="40"/>
    </location>
</feature>
<sequence length="343" mass="38533">MPRGQKSKLRAREKRHQARCENQDLGATQATVAEGESPSPAYLLFGDRPQNLPAAETPSIPEALQGAPSTTNAIAPVSCSSNEGASSQDEKSLGSSREAEGWKEDPLNKKVVSLVHFLLQKYETKEPITKGDMIKFVIRKDKCHFNEILKRASEHMELALGVDLKEVDPIRHYYAFFSKLDLTYDETTSDEEKIPKTGLLMIALGVIFLNGNRAPEEAVWEIMNMMGVYADRKHFLYGDPRKVMTKDLVQLKYLEYQQVPNSDPPRYEFLWGPRAHAETSKMKVLEFVAKIHDTVPSAFPSCYEEALRDEEQRTQARAAARAHTAAMANARSRTTSSSFSHAK</sequence>
<name>MAGBI_HUMAN</name>
<accession>Q96M61</accession>
<gene>
    <name type="primary">MAGEB18</name>
</gene>
<comment type="function">
    <text evidence="6">May enhance ubiquitin ligase activity of RING-type zinc finger-containing E3 ubiquitin-protein ligases. Proposed to act through recruitment and/or stabilization of the Ubl-conjugating enzyme (E2) at the E3:substrate complex.</text>
</comment>
<comment type="subunit">
    <text evidence="6">Interacts with LNX1.</text>
</comment>
<comment type="interaction">
    <interactant intactId="EBI-741835">
        <id>Q96M61</id>
    </interactant>
    <interactant intactId="EBI-745535">
        <id>Q8NI60</id>
        <label>COQ8A</label>
    </interactant>
    <organismsDiffer>false</organismsDiffer>
    <experiments>3</experiments>
</comment>
<comment type="interaction">
    <interactant intactId="EBI-741835">
        <id>Q96M61</id>
    </interactant>
    <interactant intactId="EBI-618165">
        <id>Q06547</id>
        <label>GABPB1</label>
    </interactant>
    <organismsDiffer>false</organismsDiffer>
    <experiments>3</experiments>
</comment>
<comment type="interaction">
    <interactant intactId="EBI-741835">
        <id>Q96M61</id>
    </interactant>
    <interactant intactId="EBI-1955541">
        <id>Q53GS7</id>
        <label>GLE1</label>
    </interactant>
    <organismsDiffer>false</organismsDiffer>
    <experiments>3</experiments>
</comment>
<comment type="interaction">
    <interactant intactId="EBI-741835">
        <id>Q96M61</id>
    </interactant>
    <interactant intactId="EBI-466029">
        <id>P42858</id>
        <label>HTT</label>
    </interactant>
    <organismsDiffer>false</organismsDiffer>
    <experiments>16</experiments>
</comment>
<comment type="interaction">
    <interactant intactId="EBI-741835">
        <id>Q96M61</id>
    </interactant>
    <interactant intactId="EBI-21591415">
        <id>P13473-2</id>
        <label>LAMP2</label>
    </interactant>
    <organismsDiffer>false</organismsDiffer>
    <experiments>3</experiments>
</comment>
<comment type="interaction">
    <interactant intactId="EBI-741835">
        <id>Q96M61</id>
    </interactant>
    <interactant intactId="EBI-739832">
        <id>Q8TBB1</id>
        <label>LNX1</label>
    </interactant>
    <organismsDiffer>false</organismsDiffer>
    <experiments>13</experiments>
</comment>
<comment type="interaction">
    <interactant intactId="EBI-741835">
        <id>Q96M61</id>
    </interactant>
    <interactant intactId="EBI-1050253">
        <id>Q96PC5</id>
        <label>MIA2</label>
    </interactant>
    <organismsDiffer>false</organismsDiffer>
    <experiments>3</experiments>
</comment>
<comment type="interaction">
    <interactant intactId="EBI-741835">
        <id>Q96M61</id>
    </interactant>
    <interactant intactId="EBI-2623095">
        <id>Q9Y371</id>
        <label>SH3GLB1</label>
    </interactant>
    <organismsDiffer>false</organismsDiffer>
    <experiments>3</experiments>
</comment>
<comment type="interaction">
    <interactant intactId="EBI-741835">
        <id>Q96M61</id>
    </interactant>
    <interactant intactId="EBI-357849">
        <id>Q15025</id>
        <label>TNIP1</label>
    </interactant>
    <organismsDiffer>false</organismsDiffer>
    <experiments>5</experiments>
</comment>
<comment type="interaction">
    <interactant intactId="EBI-741835">
        <id>Q96M61</id>
    </interactant>
    <interactant intactId="EBI-366083">
        <id>P04637</id>
        <label>TP53</label>
    </interactant>
    <organismsDiffer>false</organismsDiffer>
    <experiments>3</experiments>
</comment>
<comment type="interaction">
    <interactant intactId="EBI-741835">
        <id>Q96M61</id>
    </interactant>
    <interactant intactId="EBI-720609">
        <id>O76024</id>
        <label>WFS1</label>
    </interactant>
    <organismsDiffer>false</organismsDiffer>
    <experiments>3</experiments>
</comment>
<comment type="subcellular location">
    <subcellularLocation>
        <location evidence="1">Cytoplasm</location>
    </subcellularLocation>
</comment>
<organism>
    <name type="scientific">Homo sapiens</name>
    <name type="common">Human</name>
    <dbReference type="NCBI Taxonomy" id="9606"/>
    <lineage>
        <taxon>Eukaryota</taxon>
        <taxon>Metazoa</taxon>
        <taxon>Chordata</taxon>
        <taxon>Craniata</taxon>
        <taxon>Vertebrata</taxon>
        <taxon>Euteleostomi</taxon>
        <taxon>Mammalia</taxon>
        <taxon>Eutheria</taxon>
        <taxon>Euarchontoglires</taxon>
        <taxon>Primates</taxon>
        <taxon>Haplorrhini</taxon>
        <taxon>Catarrhini</taxon>
        <taxon>Hominidae</taxon>
        <taxon>Homo</taxon>
    </lineage>
</organism>
<protein>
    <recommendedName>
        <fullName>Melanoma-associated antigen B18</fullName>
    </recommendedName>
    <alternativeName>
        <fullName>MAGE-B18 antigen</fullName>
    </alternativeName>
</protein>
<keyword id="KW-0963">Cytoplasm</keyword>
<keyword id="KW-1267">Proteomics identification</keyword>
<keyword id="KW-1185">Reference proteome</keyword>
<keyword id="KW-0825">Tumor antigen</keyword>
<keyword id="KW-0833">Ubl conjugation pathway</keyword>
<dbReference type="EMBL" id="AK057361">
    <property type="protein sequence ID" value="BAB71450.1"/>
    <property type="molecule type" value="mRNA"/>
</dbReference>
<dbReference type="EMBL" id="AC129850">
    <property type="status" value="NOT_ANNOTATED_CDS"/>
    <property type="molecule type" value="Genomic_DNA"/>
</dbReference>
<dbReference type="EMBL" id="BC029525">
    <property type="protein sequence ID" value="AAH29525.1"/>
    <property type="molecule type" value="mRNA"/>
</dbReference>
<dbReference type="CCDS" id="CCDS14216.1"/>
<dbReference type="RefSeq" id="NP_775970.2">
    <property type="nucleotide sequence ID" value="NM_173699.4"/>
</dbReference>
<dbReference type="SMR" id="Q96M61"/>
<dbReference type="BioGRID" id="130398">
    <property type="interactions" value="10"/>
</dbReference>
<dbReference type="FunCoup" id="Q96M61">
    <property type="interactions" value="36"/>
</dbReference>
<dbReference type="IntAct" id="Q96M61">
    <property type="interactions" value="14"/>
</dbReference>
<dbReference type="STRING" id="9606.ENSP00000314543"/>
<dbReference type="iPTMnet" id="Q96M61"/>
<dbReference type="PhosphoSitePlus" id="Q96M61"/>
<dbReference type="BioMuta" id="MAGEB18"/>
<dbReference type="DMDM" id="296435512"/>
<dbReference type="MassIVE" id="Q96M61"/>
<dbReference type="PaxDb" id="9606-ENSP00000314543"/>
<dbReference type="PeptideAtlas" id="Q96M61"/>
<dbReference type="ProteomicsDB" id="77299"/>
<dbReference type="Antibodypedia" id="24619">
    <property type="antibodies" value="267 antibodies from 25 providers"/>
</dbReference>
<dbReference type="DNASU" id="286514"/>
<dbReference type="Ensembl" id="ENST00000325250.2">
    <property type="protein sequence ID" value="ENSP00000314543.1"/>
    <property type="gene ID" value="ENSG00000176774.6"/>
</dbReference>
<dbReference type="GeneID" id="286514"/>
<dbReference type="KEGG" id="hsa:286514"/>
<dbReference type="MANE-Select" id="ENST00000325250.2">
    <property type="protein sequence ID" value="ENSP00000314543.1"/>
    <property type="RefSeq nucleotide sequence ID" value="NM_173699.4"/>
    <property type="RefSeq protein sequence ID" value="NP_775970.2"/>
</dbReference>
<dbReference type="UCSC" id="uc004dbq.3">
    <property type="organism name" value="human"/>
</dbReference>
<dbReference type="AGR" id="HGNC:28515"/>
<dbReference type="CTD" id="286514"/>
<dbReference type="DisGeNET" id="286514"/>
<dbReference type="GeneCards" id="MAGEB18"/>
<dbReference type="HGNC" id="HGNC:28515">
    <property type="gene designation" value="MAGEB18"/>
</dbReference>
<dbReference type="HPA" id="ENSG00000176774">
    <property type="expression patterns" value="Not detected"/>
</dbReference>
<dbReference type="MIM" id="301064">
    <property type="type" value="gene"/>
</dbReference>
<dbReference type="neXtProt" id="NX_Q96M61"/>
<dbReference type="OpenTargets" id="ENSG00000176774"/>
<dbReference type="PharmGKB" id="PA142671483"/>
<dbReference type="VEuPathDB" id="HostDB:ENSG00000176774"/>
<dbReference type="eggNOG" id="KOG4562">
    <property type="taxonomic scope" value="Eukaryota"/>
</dbReference>
<dbReference type="GeneTree" id="ENSGT00940000163449"/>
<dbReference type="HOGENOM" id="CLU_039582_1_0_1"/>
<dbReference type="InParanoid" id="Q96M61"/>
<dbReference type="OMA" id="IRHCYAL"/>
<dbReference type="OrthoDB" id="205198at2759"/>
<dbReference type="PAN-GO" id="Q96M61">
    <property type="GO annotations" value="2 GO annotations based on evolutionary models"/>
</dbReference>
<dbReference type="PhylomeDB" id="Q96M61"/>
<dbReference type="TreeFam" id="TF328505"/>
<dbReference type="PathwayCommons" id="Q96M61"/>
<dbReference type="SignaLink" id="Q96M61"/>
<dbReference type="BioGRID-ORCS" id="286514">
    <property type="hits" value="12 hits in 759 CRISPR screens"/>
</dbReference>
<dbReference type="GenomeRNAi" id="286514"/>
<dbReference type="Pharos" id="Q96M61">
    <property type="development level" value="Tdark"/>
</dbReference>
<dbReference type="PRO" id="PR:Q96M61"/>
<dbReference type="Proteomes" id="UP000005640">
    <property type="component" value="Chromosome X"/>
</dbReference>
<dbReference type="RNAct" id="Q96M61">
    <property type="molecule type" value="protein"/>
</dbReference>
<dbReference type="Bgee" id="ENSG00000176774">
    <property type="expression patterns" value="Expressed in male germ line stem cell (sensu Vertebrata) in testis and 3 other cell types or tissues"/>
</dbReference>
<dbReference type="GO" id="GO:0005737">
    <property type="term" value="C:cytoplasm"/>
    <property type="evidence" value="ECO:0007669"/>
    <property type="project" value="UniProtKB-SubCell"/>
</dbReference>
<dbReference type="GO" id="GO:0005634">
    <property type="term" value="C:nucleus"/>
    <property type="evidence" value="ECO:0000318"/>
    <property type="project" value="GO_Central"/>
</dbReference>
<dbReference type="GO" id="GO:0000122">
    <property type="term" value="P:negative regulation of transcription by RNA polymerase II"/>
    <property type="evidence" value="ECO:0000318"/>
    <property type="project" value="GO_Central"/>
</dbReference>
<dbReference type="FunFam" id="1.10.10.1200:FF:000007">
    <property type="entry name" value="Melanoma-associated antigen C2"/>
    <property type="match status" value="1"/>
</dbReference>
<dbReference type="FunFam" id="1.10.10.1210:FF:000001">
    <property type="entry name" value="melanoma-associated antigen D1"/>
    <property type="match status" value="1"/>
</dbReference>
<dbReference type="Gene3D" id="1.10.10.1200">
    <property type="entry name" value="MAGE homology domain, winged helix WH1 motif"/>
    <property type="match status" value="1"/>
</dbReference>
<dbReference type="Gene3D" id="1.10.10.1210">
    <property type="entry name" value="MAGE homology domain, winged helix WH2 motif"/>
    <property type="match status" value="1"/>
</dbReference>
<dbReference type="InterPro" id="IPR037445">
    <property type="entry name" value="MAGE"/>
</dbReference>
<dbReference type="InterPro" id="IPR021072">
    <property type="entry name" value="MAGE_N"/>
</dbReference>
<dbReference type="InterPro" id="IPR041898">
    <property type="entry name" value="MAGE_WH1"/>
</dbReference>
<dbReference type="InterPro" id="IPR041899">
    <property type="entry name" value="MAGE_WH2"/>
</dbReference>
<dbReference type="InterPro" id="IPR002190">
    <property type="entry name" value="MHD_dom"/>
</dbReference>
<dbReference type="PANTHER" id="PTHR11736:SF23">
    <property type="entry name" value="MELANOMA-ASSOCIATED ANTIGEN B18"/>
    <property type="match status" value="1"/>
</dbReference>
<dbReference type="PANTHER" id="PTHR11736">
    <property type="entry name" value="MELANOMA-ASSOCIATED ANTIGEN MAGE ANTIGEN"/>
    <property type="match status" value="1"/>
</dbReference>
<dbReference type="Pfam" id="PF01454">
    <property type="entry name" value="MAGE"/>
    <property type="match status" value="1"/>
</dbReference>
<dbReference type="Pfam" id="PF12440">
    <property type="entry name" value="MAGE_N"/>
    <property type="match status" value="1"/>
</dbReference>
<dbReference type="SMART" id="SM01373">
    <property type="entry name" value="MAGE"/>
    <property type="match status" value="1"/>
</dbReference>
<dbReference type="SMART" id="SM01392">
    <property type="entry name" value="MAGE_N"/>
    <property type="match status" value="1"/>
</dbReference>
<dbReference type="PROSITE" id="PS50838">
    <property type="entry name" value="MAGE"/>
    <property type="match status" value="1"/>
</dbReference>